<proteinExistence type="evidence at protein level"/>
<comment type="function">
    <text evidence="1">Structural component of the T=16 icosahedral capsid. The capsid is composed of pentamers and hexamers of major capsid protein/MCP, which are linked together by heterotrimers called triplexes. These triplexes are formed by a single molecule of triplex protein 1/TRX1 and two copies of triplex protein 2/TRX2. Additionally, TRX1 is required for efficient transport of TRX2 to the nucleus, which is the site of capsid assembly.</text>
</comment>
<comment type="subunit">
    <text evidence="1">Interacts with TRX2, MCP and capsid vertex component 2/CVC2.</text>
</comment>
<comment type="subcellular location">
    <subcellularLocation>
        <location evidence="1">Virion</location>
    </subcellularLocation>
    <subcellularLocation>
        <location evidence="1">Host nucleus</location>
    </subcellularLocation>
</comment>
<comment type="similarity">
    <text evidence="1">Belongs to the herpesviridae TRX1 protein family.</text>
</comment>
<keyword id="KW-0002">3D-structure</keyword>
<keyword id="KW-0167">Capsid protein</keyword>
<keyword id="KW-1048">Host nucleus</keyword>
<keyword id="KW-0946">Virion</keyword>
<dbReference type="EMBL" id="M61774">
    <property type="protein sequence ID" value="AAA45844.1"/>
    <property type="molecule type" value="Genomic_DNA"/>
</dbReference>
<dbReference type="PIR" id="A34111">
    <property type="entry name" value="WMBEHT"/>
</dbReference>
<dbReference type="PDB" id="6M6G">
    <property type="method" value="EM"/>
    <property type="resolution" value="5.39 A"/>
    <property type="chains" value="S=1-466"/>
</dbReference>
<dbReference type="PDB" id="6M6H">
    <property type="method" value="EM"/>
    <property type="resolution" value="4.50 A"/>
    <property type="chains" value="T=1-466"/>
</dbReference>
<dbReference type="PDB" id="6M6I">
    <property type="method" value="EM"/>
    <property type="resolution" value="4.05 A"/>
    <property type="chains" value="K=1-466"/>
</dbReference>
<dbReference type="PDBsum" id="6M6G"/>
<dbReference type="PDBsum" id="6M6H"/>
<dbReference type="PDBsum" id="6M6I"/>
<dbReference type="SMR" id="P22486"/>
<dbReference type="GO" id="GO:0042025">
    <property type="term" value="C:host cell nucleus"/>
    <property type="evidence" value="ECO:0007669"/>
    <property type="project" value="UniProtKB-SubCell"/>
</dbReference>
<dbReference type="GO" id="GO:0019028">
    <property type="term" value="C:viral capsid"/>
    <property type="evidence" value="ECO:0007669"/>
    <property type="project" value="UniProtKB-KW"/>
</dbReference>
<dbReference type="GO" id="GO:0003677">
    <property type="term" value="F:DNA binding"/>
    <property type="evidence" value="ECO:0007669"/>
    <property type="project" value="InterPro"/>
</dbReference>
<dbReference type="GO" id="GO:0019069">
    <property type="term" value="P:viral capsid assembly"/>
    <property type="evidence" value="ECO:0007669"/>
    <property type="project" value="InterPro"/>
</dbReference>
<dbReference type="HAMAP" id="MF_04018">
    <property type="entry name" value="HSV_TRX1"/>
    <property type="match status" value="1"/>
</dbReference>
<dbReference type="InterPro" id="IPR004999">
    <property type="entry name" value="Herpes_1"/>
</dbReference>
<dbReference type="Pfam" id="PF03327">
    <property type="entry name" value="Herpes_VP19C"/>
    <property type="match status" value="1"/>
</dbReference>
<feature type="chain" id="PRO_0000115715" description="Triplex capsid protein 1">
    <location>
        <begin position="1"/>
        <end position="466"/>
    </location>
</feature>
<feature type="region of interest" description="Disordered" evidence="2">
    <location>
        <begin position="1"/>
        <end position="29"/>
    </location>
</feature>
<gene>
    <name evidence="1" type="primary">TRX1</name>
    <name type="ordered locus">UL38</name>
</gene>
<organismHost>
    <name type="scientific">Homo sapiens</name>
    <name type="common">Human</name>
    <dbReference type="NCBI Taxonomy" id="9606"/>
</organismHost>
<reference key="1">
    <citation type="journal article" date="1990" name="J. Virol.">
        <title>Identification and characterization of the herpes simplex virus type 2 gene encoding the essential capsid protein ICP32/VP19c.</title>
        <authorList>
            <person name="Yei S."/>
            <person name="Chowdhury S.I."/>
            <person name="Bhat B.M."/>
            <person name="Conley A.J."/>
            <person name="Wold W.S."/>
            <person name="Batterson W."/>
        </authorList>
    </citation>
    <scope>NUCLEOTIDE SEQUENCE [GENOMIC DNA]</scope>
</reference>
<accession>P22486</accession>
<evidence type="ECO:0000255" key="1">
    <source>
        <dbReference type="HAMAP-Rule" id="MF_04018"/>
    </source>
</evidence>
<evidence type="ECO:0000256" key="2">
    <source>
        <dbReference type="SAM" id="MobiDB-lite"/>
    </source>
</evidence>
<organism>
    <name type="scientific">Human herpesvirus 2 (strain G)</name>
    <name type="common">HHV-2</name>
    <name type="synonym">Human herpes simplex virus 2</name>
    <dbReference type="NCBI Taxonomy" id="10314"/>
    <lineage>
        <taxon>Viruses</taxon>
        <taxon>Duplodnaviria</taxon>
        <taxon>Heunggongvirae</taxon>
        <taxon>Peploviricota</taxon>
        <taxon>Herviviricetes</taxon>
        <taxon>Herpesvirales</taxon>
        <taxon>Orthoherpesviridae</taxon>
        <taxon>Alphaherpesvirinae</taxon>
        <taxon>Simplexvirus</taxon>
        <taxon>Simplexvirus humanalpha2</taxon>
        <taxon>Human herpesvirus 2</taxon>
    </lineage>
</organism>
<name>TRX1_HHV2G</name>
<sequence length="466" mass="50469">MKTKPLPTAPMAWAESAVETTTGPRELAGHAPLRRVLRPPIARRDGPVLLGDRAPRRTASTMWLLGIDPAESSPGTRATRDDTEQAVDKILRGARRAGGLTVPGAPRYHLTRQVTLTDLCQPNAERAGALLLALRHPTDLPHLARHRAPPGRQTERLAEAWGQLLEASALGSGRAESGCARAGLVSFNFLVAACAAAYDARDAAEAVRAHITTNYGGTRAGARLDRFSECLRAMVHTHVFPHEVMRFFGGLVSWVTQDELASVTAVCSGPQEATHTGHPGRPRSAVTIPACAFVDLDAELCLGGPGAAFLYLVFTYRQCRDQELCCVYVVKSQLPPRGLEAALERLFGRLRITNTIHGAEDMTPPPPNRNVDFPLAVLAASSQSPRCSASQVTNPQFVDRLYRWQPDLRGRPTARTCTYAAFAELGVMPDDSPRCLHRTERFGAVGVPVVILEGVVWRPGGWRACA</sequence>
<protein>
    <recommendedName>
        <fullName evidence="1">Triplex capsid protein 1</fullName>
    </recommendedName>
</protein>